<organism>
    <name type="scientific">Fowlpox virus (strain NVSL)</name>
    <name type="common">FPV</name>
    <dbReference type="NCBI Taxonomy" id="928301"/>
    <lineage>
        <taxon>Viruses</taxon>
        <taxon>Varidnaviria</taxon>
        <taxon>Bamfordvirae</taxon>
        <taxon>Nucleocytoviricota</taxon>
        <taxon>Pokkesviricetes</taxon>
        <taxon>Chitovirales</taxon>
        <taxon>Poxviridae</taxon>
        <taxon>Chordopoxvirinae</taxon>
        <taxon>Avipoxvirus</taxon>
        <taxon>Fowlpox virus</taxon>
    </lineage>
</organism>
<keyword id="KW-0040">ANK repeat</keyword>
<keyword id="KW-1185">Reference proteome</keyword>
<keyword id="KW-0677">Repeat</keyword>
<dbReference type="EMBL" id="AF198100">
    <property type="protein sequence ID" value="AAF44568.1"/>
    <property type="molecule type" value="Genomic_DNA"/>
</dbReference>
<dbReference type="RefSeq" id="NP_039187.1">
    <property type="nucleotide sequence ID" value="NC_002188.1"/>
</dbReference>
<dbReference type="SMR" id="Q9J511"/>
<dbReference type="GeneID" id="1486796"/>
<dbReference type="KEGG" id="vg:1486796"/>
<dbReference type="Proteomes" id="UP000008597">
    <property type="component" value="Segment"/>
</dbReference>
<dbReference type="Gene3D" id="1.25.40.20">
    <property type="entry name" value="Ankyrin repeat-containing domain"/>
    <property type="match status" value="2"/>
</dbReference>
<dbReference type="InterPro" id="IPR002110">
    <property type="entry name" value="Ankyrin_rpt"/>
</dbReference>
<dbReference type="InterPro" id="IPR036770">
    <property type="entry name" value="Ankyrin_rpt-contain_sf"/>
</dbReference>
<dbReference type="PANTHER" id="PTHR24198">
    <property type="entry name" value="ANKYRIN REPEAT AND PROTEIN KINASE DOMAIN-CONTAINING PROTEIN"/>
    <property type="match status" value="1"/>
</dbReference>
<dbReference type="PANTHER" id="PTHR24198:SF165">
    <property type="entry name" value="ANKYRIN REPEAT-CONTAINING PROTEIN-RELATED"/>
    <property type="match status" value="1"/>
</dbReference>
<dbReference type="Pfam" id="PF12796">
    <property type="entry name" value="Ank_2"/>
    <property type="match status" value="1"/>
</dbReference>
<dbReference type="Pfam" id="PF13637">
    <property type="entry name" value="Ank_4"/>
    <property type="match status" value="1"/>
</dbReference>
<dbReference type="SMART" id="SM00248">
    <property type="entry name" value="ANK"/>
    <property type="match status" value="3"/>
</dbReference>
<dbReference type="SUPFAM" id="SSF48403">
    <property type="entry name" value="Ankyrin repeat"/>
    <property type="match status" value="1"/>
</dbReference>
<dbReference type="PROSITE" id="PS50297">
    <property type="entry name" value="ANK_REP_REGION"/>
    <property type="match status" value="1"/>
</dbReference>
<dbReference type="PROSITE" id="PS50088">
    <property type="entry name" value="ANK_REPEAT"/>
    <property type="match status" value="1"/>
</dbReference>
<reference key="1">
    <citation type="journal article" date="2000" name="J. Virol.">
        <title>The genome of fowlpox virus.</title>
        <authorList>
            <person name="Afonso C.L."/>
            <person name="Tulman E.R."/>
            <person name="Lu Z."/>
            <person name="Zsak L."/>
            <person name="Kutish G.F."/>
            <person name="Rock D.L."/>
        </authorList>
    </citation>
    <scope>NUCLEOTIDE SEQUENCE [LARGE SCALE GENOMIC DNA]</scope>
</reference>
<organismHost>
    <name type="scientific">Vertebrata</name>
    <dbReference type="NCBI Taxonomy" id="7742"/>
</organismHost>
<protein>
    <recommendedName>
        <fullName>Putative ankyrin repeat protein FPV224</fullName>
    </recommendedName>
</protein>
<name>V224_FOWPN</name>
<accession>Q9J511</accession>
<sequence length="146" mass="16759">MNINATDNSLSTPLHHAINLLKTDIVSLLMQYKADASIRDSKGITPFCYAMYLGYYGVNKDILNIITRYNSINGTTRDINDVYTILLNNKKKNYVFVNLHDAARLGYVYILKKIIYNGKNINRIDEYYYSALHYAVKSSNLKAVNF</sequence>
<feature type="chain" id="PRO_0000067118" description="Putative ankyrin repeat protein FPV224">
    <location>
        <begin position="1"/>
        <end position="146"/>
    </location>
</feature>
<feature type="repeat" description="ANK 1">
    <location>
        <begin position="9"/>
        <end position="38"/>
    </location>
</feature>
<feature type="repeat" description="ANK 2">
    <location>
        <begin position="42"/>
        <end position="79"/>
    </location>
</feature>
<feature type="repeat" description="ANK 3">
    <location>
        <begin position="94"/>
        <end position="126"/>
    </location>
</feature>
<feature type="repeat" description="ANK 4">
    <location>
        <begin position="127"/>
        <end position="145"/>
    </location>
</feature>
<gene>
    <name type="ordered locus">FPV224</name>
</gene>
<proteinExistence type="predicted"/>